<sequence>MPPKTKEKGTKAGAQKKKRNAGADVEAESMRRLALLEKEVLQDCLALQRDEARRAKASEDQLKQRIKDLEAELEGARSEGKAIYAEMSRQCRSLQEAMQSRSRQLEEEVEGLREQLELCQREAEAAQREAKQALGERDQTLAQFRAHVADMEAKYEEILHDSLDRLLAKLRDEASVGRGCAETPHQAQGAAPPVWTQPPGSLKL</sequence>
<accession>Q0P5D1</accession>
<protein>
    <recommendedName>
        <fullName>Dynein regulatory complex protein 12</fullName>
    </recommendedName>
</protein>
<proteinExistence type="evidence at transcript level"/>
<evidence type="ECO:0000250" key="1">
    <source>
        <dbReference type="UniProtKB" id="Q22RH5"/>
    </source>
</evidence>
<evidence type="ECO:0000255" key="2"/>
<evidence type="ECO:0000256" key="3">
    <source>
        <dbReference type="SAM" id="MobiDB-lite"/>
    </source>
</evidence>
<evidence type="ECO:0000305" key="4"/>
<dbReference type="EMBL" id="BC120213">
    <property type="protein sequence ID" value="AAI20214.1"/>
    <property type="molecule type" value="mRNA"/>
</dbReference>
<dbReference type="RefSeq" id="NP_001068833.1">
    <property type="nucleotide sequence ID" value="NM_001075365.1"/>
</dbReference>
<dbReference type="SMR" id="Q0P5D1"/>
<dbReference type="FunCoup" id="Q0P5D1">
    <property type="interactions" value="15"/>
</dbReference>
<dbReference type="STRING" id="9913.ENSBTAP00000023660"/>
<dbReference type="PaxDb" id="9913-ENSBTAP00000023660"/>
<dbReference type="GeneID" id="508592"/>
<dbReference type="KEGG" id="bta:508592"/>
<dbReference type="CTD" id="270150"/>
<dbReference type="eggNOG" id="ENOG502S1BN">
    <property type="taxonomic scope" value="Eukaryota"/>
</dbReference>
<dbReference type="HOGENOM" id="CLU_088442_0_0_1"/>
<dbReference type="InParanoid" id="Q0P5D1"/>
<dbReference type="OrthoDB" id="10264405at2759"/>
<dbReference type="TreeFam" id="TF343461"/>
<dbReference type="Proteomes" id="UP000009136">
    <property type="component" value="Unplaced"/>
</dbReference>
<dbReference type="GO" id="GO:0005737">
    <property type="term" value="C:cytoplasm"/>
    <property type="evidence" value="ECO:0007669"/>
    <property type="project" value="UniProtKB-KW"/>
</dbReference>
<dbReference type="GO" id="GO:0005856">
    <property type="term" value="C:cytoskeleton"/>
    <property type="evidence" value="ECO:0007669"/>
    <property type="project" value="UniProtKB-KW"/>
</dbReference>
<dbReference type="GO" id="GO:0031514">
    <property type="term" value="C:motile cilium"/>
    <property type="evidence" value="ECO:0007669"/>
    <property type="project" value="UniProtKB-KW"/>
</dbReference>
<dbReference type="InterPro" id="IPR033585">
    <property type="entry name" value="DRC12-like"/>
</dbReference>
<dbReference type="PANTHER" id="PTHR28656">
    <property type="entry name" value="COILED-COIL DOMAIN-CONTAINING PROTEIN 153"/>
    <property type="match status" value="1"/>
</dbReference>
<dbReference type="PANTHER" id="PTHR28656:SF1">
    <property type="entry name" value="COILED-COIL DOMAIN-CONTAINING PROTEIN 153"/>
    <property type="match status" value="1"/>
</dbReference>
<comment type="function">
    <text evidence="1">Component of the nexin-dynein regulatory complex (N-DRC), a key regulator of ciliary/flagellar motility which maintains the alignment and integrity of the distal axoneme and regulates microtubule sliding in motile axonemes.</text>
</comment>
<comment type="subunit">
    <text evidence="1">Component of the nexin-dynein regulatory complex (N-DRC).</text>
</comment>
<comment type="subcellular location">
    <subcellularLocation>
        <location evidence="1">Cytoplasm</location>
        <location evidence="1">Cytoskeleton</location>
        <location evidence="1">Flagellum axoneme</location>
    </subcellularLocation>
</comment>
<comment type="similarity">
    <text evidence="4">Belongs to the DRC12 family.</text>
</comment>
<keyword id="KW-0966">Cell projection</keyword>
<keyword id="KW-0969">Cilium</keyword>
<keyword id="KW-0175">Coiled coil</keyword>
<keyword id="KW-0963">Cytoplasm</keyword>
<keyword id="KW-0206">Cytoskeleton</keyword>
<keyword id="KW-0282">Flagellum</keyword>
<keyword id="KW-1185">Reference proteome</keyword>
<organism>
    <name type="scientific">Bos taurus</name>
    <name type="common">Bovine</name>
    <dbReference type="NCBI Taxonomy" id="9913"/>
    <lineage>
        <taxon>Eukaryota</taxon>
        <taxon>Metazoa</taxon>
        <taxon>Chordata</taxon>
        <taxon>Craniata</taxon>
        <taxon>Vertebrata</taxon>
        <taxon>Euteleostomi</taxon>
        <taxon>Mammalia</taxon>
        <taxon>Eutheria</taxon>
        <taxon>Laurasiatheria</taxon>
        <taxon>Artiodactyla</taxon>
        <taxon>Ruminantia</taxon>
        <taxon>Pecora</taxon>
        <taxon>Bovidae</taxon>
        <taxon>Bovinae</taxon>
        <taxon>Bos</taxon>
    </lineage>
</organism>
<name>DRC12_BOVIN</name>
<gene>
    <name type="primary">DRC12</name>
    <name type="synonym">CCDC153</name>
</gene>
<feature type="chain" id="PRO_0000342649" description="Dynein regulatory complex protein 12">
    <location>
        <begin position="1"/>
        <end position="204"/>
    </location>
</feature>
<feature type="region of interest" description="Disordered" evidence="3">
    <location>
        <begin position="1"/>
        <end position="26"/>
    </location>
</feature>
<feature type="region of interest" description="Disordered" evidence="3">
    <location>
        <begin position="175"/>
        <end position="204"/>
    </location>
</feature>
<feature type="coiled-coil region" evidence="2">
    <location>
        <begin position="45"/>
        <end position="159"/>
    </location>
</feature>
<feature type="compositionally biased region" description="Basic and acidic residues" evidence="3">
    <location>
        <begin position="1"/>
        <end position="10"/>
    </location>
</feature>
<reference key="1">
    <citation type="submission" date="2006-08" db="EMBL/GenBank/DDBJ databases">
        <authorList>
            <consortium name="NIH - Mammalian Gene Collection (MGC) project"/>
        </authorList>
    </citation>
    <scope>NUCLEOTIDE SEQUENCE [LARGE SCALE MRNA]</scope>
    <source>
        <strain>Hereford</strain>
        <tissue>Fetal pons</tissue>
    </source>
</reference>